<organism>
    <name type="scientific">Mus musculus</name>
    <name type="common">Mouse</name>
    <dbReference type="NCBI Taxonomy" id="10090"/>
    <lineage>
        <taxon>Eukaryota</taxon>
        <taxon>Metazoa</taxon>
        <taxon>Chordata</taxon>
        <taxon>Craniata</taxon>
        <taxon>Vertebrata</taxon>
        <taxon>Euteleostomi</taxon>
        <taxon>Mammalia</taxon>
        <taxon>Eutheria</taxon>
        <taxon>Euarchontoglires</taxon>
        <taxon>Glires</taxon>
        <taxon>Rodentia</taxon>
        <taxon>Myomorpha</taxon>
        <taxon>Muroidea</taxon>
        <taxon>Muridae</taxon>
        <taxon>Murinae</taxon>
        <taxon>Mus</taxon>
        <taxon>Mus</taxon>
    </lineage>
</organism>
<dbReference type="EC" id="1.14.11.4" evidence="2"/>
<dbReference type="EMBL" id="AF080572">
    <property type="protein sequence ID" value="AAD53987.1"/>
    <property type="molecule type" value="mRNA"/>
</dbReference>
<dbReference type="EMBL" id="AC165156">
    <property type="status" value="NOT_ANNOTATED_CDS"/>
    <property type="molecule type" value="Genomic_DNA"/>
</dbReference>
<dbReference type="EMBL" id="BC021352">
    <property type="protein sequence ID" value="AAH21352.1"/>
    <property type="molecule type" value="mRNA"/>
</dbReference>
<dbReference type="CCDS" id="CCDS23408.1"/>
<dbReference type="RefSeq" id="NP_001136388.1">
    <property type="nucleotide sequence ID" value="NM_001142916.1"/>
</dbReference>
<dbReference type="RefSeq" id="NP_036091.2">
    <property type="nucleotide sequence ID" value="NM_011961.3"/>
</dbReference>
<dbReference type="SMR" id="Q9R0B9"/>
<dbReference type="BioGRID" id="204984">
    <property type="interactions" value="12"/>
</dbReference>
<dbReference type="CORUM" id="Q9R0B9"/>
<dbReference type="FunCoup" id="Q9R0B9">
    <property type="interactions" value="1085"/>
</dbReference>
<dbReference type="STRING" id="10090.ENSMUSP00000125373"/>
<dbReference type="GlyConnect" id="2608">
    <property type="glycosylation" value="1 N-Linked glycan (1 site)"/>
</dbReference>
<dbReference type="GlyCosmos" id="Q9R0B9">
    <property type="glycosylation" value="6 sites, 1 glycan"/>
</dbReference>
<dbReference type="GlyGen" id="Q9R0B9">
    <property type="glycosylation" value="6 sites, 2 N-linked glycans (4 sites)"/>
</dbReference>
<dbReference type="iPTMnet" id="Q9R0B9"/>
<dbReference type="PhosphoSitePlus" id="Q9R0B9"/>
<dbReference type="jPOST" id="Q9R0B9"/>
<dbReference type="PaxDb" id="10090-ENSMUSP00000125373"/>
<dbReference type="PeptideAtlas" id="Q9R0B9"/>
<dbReference type="ProteomicsDB" id="288255"/>
<dbReference type="Pumba" id="Q9R0B9"/>
<dbReference type="Antibodypedia" id="33520">
    <property type="antibodies" value="248 antibodies from 28 providers"/>
</dbReference>
<dbReference type="DNASU" id="26432"/>
<dbReference type="Ensembl" id="ENSMUST00000070522.14">
    <property type="protein sequence ID" value="ENSMUSP00000068611.8"/>
    <property type="gene ID" value="ENSMUSG00000032374.15"/>
</dbReference>
<dbReference type="GeneID" id="26432"/>
<dbReference type="KEGG" id="mmu:26432"/>
<dbReference type="UCSC" id="uc009rau.2">
    <property type="organism name" value="mouse"/>
</dbReference>
<dbReference type="AGR" id="MGI:1347007"/>
<dbReference type="CTD" id="5352"/>
<dbReference type="MGI" id="MGI:1347007">
    <property type="gene designation" value="Plod2"/>
</dbReference>
<dbReference type="VEuPathDB" id="HostDB:ENSMUSG00000032374"/>
<dbReference type="eggNOG" id="KOG1971">
    <property type="taxonomic scope" value="Eukaryota"/>
</dbReference>
<dbReference type="GeneTree" id="ENSGT01030000234558"/>
<dbReference type="InParanoid" id="Q9R0B9"/>
<dbReference type="OMA" id="RNAREMN"/>
<dbReference type="OrthoDB" id="69177at2759"/>
<dbReference type="BRENDA" id="1.14.11.4">
    <property type="organism ID" value="3474"/>
</dbReference>
<dbReference type="Reactome" id="R-MMU-1650814">
    <property type="pathway name" value="Collagen biosynthesis and modifying enzymes"/>
</dbReference>
<dbReference type="BioGRID-ORCS" id="26432">
    <property type="hits" value="1 hit in 77 CRISPR screens"/>
</dbReference>
<dbReference type="ChiTaRS" id="Plod2">
    <property type="organism name" value="mouse"/>
</dbReference>
<dbReference type="PRO" id="PR:Q9R0B9"/>
<dbReference type="Proteomes" id="UP000000589">
    <property type="component" value="Chromosome 9"/>
</dbReference>
<dbReference type="RNAct" id="Q9R0B9">
    <property type="molecule type" value="protein"/>
</dbReference>
<dbReference type="Bgee" id="ENSMUSG00000032374">
    <property type="expression patterns" value="Expressed in molar tooth and 247 other cell types or tissues"/>
</dbReference>
<dbReference type="ExpressionAtlas" id="Q9R0B9">
    <property type="expression patterns" value="baseline and differential"/>
</dbReference>
<dbReference type="GO" id="GO:0030867">
    <property type="term" value="C:rough endoplasmic reticulum membrane"/>
    <property type="evidence" value="ECO:0007669"/>
    <property type="project" value="UniProtKB-SubCell"/>
</dbReference>
<dbReference type="GO" id="GO:0005506">
    <property type="term" value="F:iron ion binding"/>
    <property type="evidence" value="ECO:0007669"/>
    <property type="project" value="InterPro"/>
</dbReference>
<dbReference type="GO" id="GO:0031418">
    <property type="term" value="F:L-ascorbic acid binding"/>
    <property type="evidence" value="ECO:0007669"/>
    <property type="project" value="UniProtKB-KW"/>
</dbReference>
<dbReference type="GO" id="GO:0008475">
    <property type="term" value="F:procollagen-lysine 5-dioxygenase activity"/>
    <property type="evidence" value="ECO:0007669"/>
    <property type="project" value="UniProtKB-EC"/>
</dbReference>
<dbReference type="FunFam" id="2.60.120.620:FF:000004">
    <property type="entry name" value="Procollagen-lysine,2-oxoglutarate 5-dioxygenase 2"/>
    <property type="match status" value="1"/>
</dbReference>
<dbReference type="FunFam" id="3.90.550.10:FF:000140">
    <property type="entry name" value="Procollagen-lysine,2-oxoglutarate 5-dioxygenase 2"/>
    <property type="match status" value="1"/>
</dbReference>
<dbReference type="Gene3D" id="2.60.120.620">
    <property type="entry name" value="q2cbj1_9rhob like domain"/>
    <property type="match status" value="1"/>
</dbReference>
<dbReference type="Gene3D" id="3.90.550.10">
    <property type="entry name" value="Spore Coat Polysaccharide Biosynthesis Protein SpsA, Chain A"/>
    <property type="match status" value="1"/>
</dbReference>
<dbReference type="InterPro" id="IPR050757">
    <property type="entry name" value="Collagen_mod_GT25"/>
</dbReference>
<dbReference type="InterPro" id="IPR044861">
    <property type="entry name" value="IPNS-like_FE2OG_OXY"/>
</dbReference>
<dbReference type="InterPro" id="IPR029044">
    <property type="entry name" value="Nucleotide-diphossugar_trans"/>
</dbReference>
<dbReference type="InterPro" id="IPR005123">
    <property type="entry name" value="Oxoglu/Fe-dep_dioxygenase_dom"/>
</dbReference>
<dbReference type="InterPro" id="IPR006620">
    <property type="entry name" value="Pro_4_hyd_alph"/>
</dbReference>
<dbReference type="InterPro" id="IPR001006">
    <property type="entry name" value="Procol_lys_dOase"/>
</dbReference>
<dbReference type="PANTHER" id="PTHR10730:SF6">
    <property type="entry name" value="PROCOLLAGEN-LYSINE,2-OXOGLUTARATE 5-DIOXYGENASE 2"/>
    <property type="match status" value="1"/>
</dbReference>
<dbReference type="PANTHER" id="PTHR10730">
    <property type="entry name" value="PROCOLLAGEN-LYSINE,2-OXOGLUTARATE 5-DIOXYGENASE/GLYCOSYLTRANSFERASE 25 FAMILY MEMBER"/>
    <property type="match status" value="1"/>
</dbReference>
<dbReference type="Pfam" id="PF03171">
    <property type="entry name" value="2OG-FeII_Oxy"/>
    <property type="match status" value="1"/>
</dbReference>
<dbReference type="Pfam" id="PF25342">
    <property type="entry name" value="GT_PLOD"/>
    <property type="match status" value="1"/>
</dbReference>
<dbReference type="SMART" id="SM00702">
    <property type="entry name" value="P4Hc"/>
    <property type="match status" value="1"/>
</dbReference>
<dbReference type="SUPFAM" id="SSF53448">
    <property type="entry name" value="Nucleotide-diphospho-sugar transferases"/>
    <property type="match status" value="1"/>
</dbReference>
<dbReference type="PROSITE" id="PS51471">
    <property type="entry name" value="FE2OG_OXY"/>
    <property type="match status" value="1"/>
</dbReference>
<dbReference type="PROSITE" id="PS01325">
    <property type="entry name" value="LYS_HYDROXYLASE"/>
    <property type="match status" value="1"/>
</dbReference>
<keyword id="KW-0223">Dioxygenase</keyword>
<keyword id="KW-0256">Endoplasmic reticulum</keyword>
<keyword id="KW-0325">Glycoprotein</keyword>
<keyword id="KW-0408">Iron</keyword>
<keyword id="KW-0472">Membrane</keyword>
<keyword id="KW-0479">Metal-binding</keyword>
<keyword id="KW-0560">Oxidoreductase</keyword>
<keyword id="KW-0597">Phosphoprotein</keyword>
<keyword id="KW-1185">Reference proteome</keyword>
<keyword id="KW-0732">Signal</keyword>
<keyword id="KW-0847">Vitamin C</keyword>
<proteinExistence type="evidence at protein level"/>
<gene>
    <name type="primary">Plod2</name>
</gene>
<reference key="1">
    <citation type="journal article" date="1999" name="Matrix Biol.">
        <title>Characterization of cDNAs for mouse lysyl hydroxylase 1, 2 and 3, their phylogenetic analysis and tissue-specific expression in the mouse.</title>
        <authorList>
            <person name="Ruotsalainen H."/>
            <person name="Sipila L."/>
            <person name="Kerkela E."/>
            <person name="Pospiech H."/>
            <person name="Myllylae R."/>
        </authorList>
    </citation>
    <scope>NUCLEOTIDE SEQUENCE [MRNA]</scope>
    <scope>TISSUE SPECIFICITY</scope>
</reference>
<reference key="2">
    <citation type="journal article" date="2009" name="PLoS Biol.">
        <title>Lineage-specific biology revealed by a finished genome assembly of the mouse.</title>
        <authorList>
            <person name="Church D.M."/>
            <person name="Goodstadt L."/>
            <person name="Hillier L.W."/>
            <person name="Zody M.C."/>
            <person name="Goldstein S."/>
            <person name="She X."/>
            <person name="Bult C.J."/>
            <person name="Agarwala R."/>
            <person name="Cherry J.L."/>
            <person name="DiCuccio M."/>
            <person name="Hlavina W."/>
            <person name="Kapustin Y."/>
            <person name="Meric P."/>
            <person name="Maglott D."/>
            <person name="Birtle Z."/>
            <person name="Marques A.C."/>
            <person name="Graves T."/>
            <person name="Zhou S."/>
            <person name="Teague B."/>
            <person name="Potamousis K."/>
            <person name="Churas C."/>
            <person name="Place M."/>
            <person name="Herschleb J."/>
            <person name="Runnheim R."/>
            <person name="Forrest D."/>
            <person name="Amos-Landgraf J."/>
            <person name="Schwartz D.C."/>
            <person name="Cheng Z."/>
            <person name="Lindblad-Toh K."/>
            <person name="Eichler E.E."/>
            <person name="Ponting C.P."/>
        </authorList>
    </citation>
    <scope>NUCLEOTIDE SEQUENCE [LARGE SCALE GENOMIC DNA]</scope>
    <source>
        <strain>C57BL/6J</strain>
    </source>
</reference>
<reference key="3">
    <citation type="journal article" date="2004" name="Genome Res.">
        <title>The status, quality, and expansion of the NIH full-length cDNA project: the Mammalian Gene Collection (MGC).</title>
        <authorList>
            <consortium name="The MGC Project Team"/>
        </authorList>
    </citation>
    <scope>NUCLEOTIDE SEQUENCE [LARGE SCALE MRNA]</scope>
</reference>
<reference key="4">
    <citation type="journal article" date="2010" name="Cell">
        <title>A tissue-specific atlas of mouse protein phosphorylation and expression.</title>
        <authorList>
            <person name="Huttlin E.L."/>
            <person name="Jedrychowski M.P."/>
            <person name="Elias J.E."/>
            <person name="Goswami T."/>
            <person name="Rad R."/>
            <person name="Beausoleil S.A."/>
            <person name="Villen J."/>
            <person name="Haas W."/>
            <person name="Sowa M.E."/>
            <person name="Gygi S.P."/>
        </authorList>
    </citation>
    <scope>IDENTIFICATION BY MASS SPECTROMETRY [LARGE SCALE ANALYSIS]</scope>
    <source>
        <tissue>Heart</tissue>
        <tissue>Kidney</tissue>
        <tissue>Lung</tissue>
        <tissue>Spleen</tissue>
        <tissue>Testis</tissue>
    </source>
</reference>
<reference key="5">
    <citation type="journal article" date="2013" name="Mol. Cell">
        <title>SIRT5-mediated lysine desuccinylation impacts diverse metabolic pathways.</title>
        <authorList>
            <person name="Park J."/>
            <person name="Chen Y."/>
            <person name="Tishkoff D.X."/>
            <person name="Peng C."/>
            <person name="Tan M."/>
            <person name="Dai L."/>
            <person name="Xie Z."/>
            <person name="Zhang Y."/>
            <person name="Zwaans B.M."/>
            <person name="Skinner M.E."/>
            <person name="Lombard D.B."/>
            <person name="Zhao Y."/>
        </authorList>
    </citation>
    <scope>SUCCINYLATION [LARGE SCALE ANALYSIS] AT LYS-704</scope>
    <scope>IDENTIFICATION BY MASS SPECTROMETRY [LARGE SCALE ANALYSIS]</scope>
    <source>
        <tissue>Embryonic fibroblast</tissue>
    </source>
</reference>
<protein>
    <recommendedName>
        <fullName>Procollagen-lysine,2-oxoglutarate 5-dioxygenase 2</fullName>
        <ecNumber evidence="2">1.14.11.4</ecNumber>
    </recommendedName>
    <alternativeName>
        <fullName>Lysyl hydroxylase 2</fullName>
        <shortName>LH2</shortName>
    </alternativeName>
</protein>
<accession>Q9R0B9</accession>
<accession>E9QM54</accession>
<accession>Q8VDT4</accession>
<comment type="function">
    <text evidence="2">Forms hydroxylysine residues in -Xaa-Lys-Gly- sequences in collagens. These hydroxylysines serve as sites of attachment for carbohydrate units and are essential for the stability of the intermolecular collagen cross-links.</text>
</comment>
<comment type="catalytic activity">
    <reaction evidence="2">
        <text>L-lysyl-[collagen] + 2-oxoglutarate + O2 = (5R)-5-hydroxy-L-lysyl-[collagen] + succinate + CO2</text>
        <dbReference type="Rhea" id="RHEA:16569"/>
        <dbReference type="Rhea" id="RHEA-COMP:12751"/>
        <dbReference type="Rhea" id="RHEA-COMP:12752"/>
        <dbReference type="ChEBI" id="CHEBI:15379"/>
        <dbReference type="ChEBI" id="CHEBI:16526"/>
        <dbReference type="ChEBI" id="CHEBI:16810"/>
        <dbReference type="ChEBI" id="CHEBI:29969"/>
        <dbReference type="ChEBI" id="CHEBI:30031"/>
        <dbReference type="ChEBI" id="CHEBI:133442"/>
        <dbReference type="EC" id="1.14.11.4"/>
    </reaction>
</comment>
<comment type="cofactor">
    <cofactor evidence="2">
        <name>Fe(2+)</name>
        <dbReference type="ChEBI" id="CHEBI:29033"/>
    </cofactor>
</comment>
<comment type="cofactor">
    <cofactor evidence="2">
        <name>L-ascorbate</name>
        <dbReference type="ChEBI" id="CHEBI:38290"/>
    </cofactor>
</comment>
<comment type="subunit">
    <text evidence="2">Homodimer.</text>
</comment>
<comment type="subcellular location">
    <subcellularLocation>
        <location>Rough endoplasmic reticulum membrane</location>
        <topology>Peripheral membrane protein</topology>
        <orientation>Lumenal side</orientation>
    </subcellularLocation>
</comment>
<comment type="tissue specificity">
    <text evidence="5">Is highly expressed in the heart, lung, kidney, eye, ovary and placenta.</text>
</comment>
<name>PLOD2_MOUSE</name>
<evidence type="ECO:0000250" key="1">
    <source>
        <dbReference type="UniProtKB" id="O00469"/>
    </source>
</evidence>
<evidence type="ECO:0000250" key="2">
    <source>
        <dbReference type="UniProtKB" id="P24802"/>
    </source>
</evidence>
<evidence type="ECO:0000255" key="3"/>
<evidence type="ECO:0000255" key="4">
    <source>
        <dbReference type="PROSITE-ProRule" id="PRU00805"/>
    </source>
</evidence>
<evidence type="ECO:0000269" key="5">
    <source>
    </source>
</evidence>
<evidence type="ECO:0000305" key="6"/>
<evidence type="ECO:0007744" key="7">
    <source>
    </source>
</evidence>
<sequence length="737" mass="84488">MGDRGARPGRLMPMLALLSWAAGLGVAEETPGRIPADKLLVITVATKENDGFHRFMNSAKYFNYTVKVLGQGQEWRGGDGMNSIGGGQKVRLLKEAMEHYASQEDLVILFTECFDVVFAGGPEEVLKKFQKTNHKIVFAADGLLWPDKRLADKYPVVHIGKRYLNSGGFIGYAPYISRLVQQWNLQDNDDDQLFYTKVYIDPLKREAFNITLDHKCKIFQALNGATDEVVLKFENGKSRVKNTFYETLPVAINGNGPTKILLNYFGNYVPNSWTQENGCALCDVDTIDLSTVDVPPKVTLGVFIEQPTPFLPRFLNLLLTLDYPKEALQLFIHNKEVYHEKDIKVFVDKAKHDISSIKIVGPEENLSQAEARNMGMDFCRQDEKCDYYFSVDADVVLTNPRTLKFLIEQNRKIIAPLVTRHGKLWSNFWGALSPDGYYARSEDYVDIVQGNRVGIWNVPYMANVYLIQGKTLRSEMNERNYFVRDKLDPDMALCRNARDMGVFMYISNRHEFGRLISTANYNTSHLNNDFWQIFENPVDWKEKYINRDYSKIFTENIVEQPCPDVFWFPIFSERACDELVEEMEHYGKWSGGKHHDSRISGGYENVPTDDIHMKQIGLENVWLHFIREFIAPVTLKVFAGYYTKGFALLNFVVKYSPERQRSLRPHHDASTFTINIALNNVGEDFQGGGCKFLRYNCSIESPRKGWSFMHPGRLTHLHEGLPVKNGTRYIAVSFIDP</sequence>
<feature type="signal peptide" evidence="3">
    <location>
        <begin position="1"/>
        <end position="25"/>
    </location>
</feature>
<feature type="chain" id="PRO_0000024684" description="Procollagen-lysine,2-oxoglutarate 5-dioxygenase 2">
    <location>
        <begin position="26"/>
        <end position="737"/>
    </location>
</feature>
<feature type="domain" description="Fe2OG dioxygenase" evidence="4">
    <location>
        <begin position="644"/>
        <end position="737"/>
    </location>
</feature>
<feature type="active site" evidence="3">
    <location>
        <position position="728"/>
    </location>
</feature>
<feature type="binding site" evidence="4">
    <location>
        <position position="666"/>
    </location>
    <ligand>
        <name>Fe cation</name>
        <dbReference type="ChEBI" id="CHEBI:24875"/>
    </ligand>
</feature>
<feature type="binding site" evidence="4">
    <location>
        <position position="668"/>
    </location>
    <ligand>
        <name>Fe cation</name>
        <dbReference type="ChEBI" id="CHEBI:24875"/>
    </ligand>
</feature>
<feature type="binding site" evidence="4">
    <location>
        <position position="718"/>
    </location>
    <ligand>
        <name>Fe cation</name>
        <dbReference type="ChEBI" id="CHEBI:24875"/>
    </ligand>
</feature>
<feature type="modified residue" description="Phosphothreonine" evidence="1">
    <location>
        <position position="320"/>
    </location>
</feature>
<feature type="modified residue" description="Phosphotyrosine" evidence="1">
    <location>
        <position position="323"/>
    </location>
</feature>
<feature type="modified residue" description="N6-succinyllysine" evidence="7">
    <location>
        <position position="704"/>
    </location>
</feature>
<feature type="glycosylation site" description="N-linked (GlcNAc...) asparagine" evidence="3">
    <location>
        <position position="63"/>
    </location>
</feature>
<feature type="glycosylation site" description="N-linked (GlcNAc...) asparagine" evidence="3">
    <location>
        <position position="209"/>
    </location>
</feature>
<feature type="glycosylation site" description="N-linked (GlcNAc...) asparagine" evidence="3">
    <location>
        <position position="365"/>
    </location>
</feature>
<feature type="glycosylation site" description="N-linked (GlcNAc...) asparagine" evidence="3">
    <location>
        <position position="522"/>
    </location>
</feature>
<feature type="glycosylation site" description="N-linked (GlcNAc...) asparagine" evidence="3">
    <location>
        <position position="696"/>
    </location>
</feature>
<feature type="glycosylation site" description="N-linked (GlcNAc...) asparagine" evidence="3">
    <location>
        <position position="725"/>
    </location>
</feature>
<feature type="sequence conflict" description="In Ref. 1; AAD53987." evidence="6" ref="1">
    <original>G</original>
    <variation>E</variation>
    <location>
        <position position="2"/>
    </location>
</feature>
<feature type="sequence conflict" description="In Ref. 3; AAH21352." evidence="6" ref="3">
    <original>F</original>
    <variation>I</variation>
    <location>
        <position position="405"/>
    </location>
</feature>
<feature type="sequence conflict" description="In Ref. 1; AAD53987 and 3; AAH21352." evidence="6" ref="1 3">
    <original>I</original>
    <variation>T</variation>
    <location>
        <position position="611"/>
    </location>
</feature>